<feature type="chain" id="PRO_0000071375" description="Uncharacterized protein R857">
    <location>
        <begin position="1"/>
        <end position="180"/>
    </location>
</feature>
<feature type="coiled-coil region" evidence="1">
    <location>
        <begin position="114"/>
        <end position="147"/>
    </location>
</feature>
<sequence>MLGEGSDFFDQGGYKFLRCYNNESIGFTVVMNLRANISAKPYYVGTETKYGELLPKNKFYATKAKVSRIKTIDEMDVPDKFFDEFQCYAYDGTKLKKFFPGQTIRNMNFYRDSEDIYEDIVDVRLENQSLEEQLEDFKECSRALKKYDNFWRSDRAKYLKLQEHCDNEYNRVLDKINNKK</sequence>
<organism>
    <name type="scientific">Acanthamoeba polyphaga mimivirus</name>
    <name type="common">APMV</name>
    <dbReference type="NCBI Taxonomy" id="212035"/>
    <lineage>
        <taxon>Viruses</taxon>
        <taxon>Varidnaviria</taxon>
        <taxon>Bamfordvirae</taxon>
        <taxon>Nucleocytoviricota</taxon>
        <taxon>Megaviricetes</taxon>
        <taxon>Imitervirales</taxon>
        <taxon>Mimiviridae</taxon>
        <taxon>Megamimivirinae</taxon>
        <taxon>Mimivirus</taxon>
        <taxon>Mimivirus bradfordmassiliense</taxon>
    </lineage>
</organism>
<comment type="similarity">
    <text evidence="2">Belongs to the mimivirus L74/L77/R857 family.</text>
</comment>
<reference key="1">
    <citation type="journal article" date="2004" name="Science">
        <title>The 1.2-megabase genome sequence of Mimivirus.</title>
        <authorList>
            <person name="Raoult D."/>
            <person name="Audic S."/>
            <person name="Robert C."/>
            <person name="Abergel C."/>
            <person name="Renesto P."/>
            <person name="Ogata H."/>
            <person name="La Scola B."/>
            <person name="Susan M."/>
            <person name="Claverie J.-M."/>
        </authorList>
    </citation>
    <scope>NUCLEOTIDE SEQUENCE [LARGE SCALE GENOMIC DNA]</scope>
    <source>
        <strain>Rowbotham-Bradford</strain>
    </source>
</reference>
<name>YR857_MIMIV</name>
<organismHost>
    <name type="scientific">Acanthamoeba polyphaga</name>
    <name type="common">Amoeba</name>
    <dbReference type="NCBI Taxonomy" id="5757"/>
</organismHost>
<dbReference type="EMBL" id="AY653733">
    <property type="protein sequence ID" value="AAV51115.1"/>
    <property type="molecule type" value="Genomic_DNA"/>
</dbReference>
<dbReference type="KEGG" id="vg:9925518"/>
<dbReference type="Proteomes" id="UP000001134">
    <property type="component" value="Genome"/>
</dbReference>
<protein>
    <recommendedName>
        <fullName>Uncharacterized protein R857</fullName>
    </recommendedName>
</protein>
<gene>
    <name type="ordered locus">MIMI_R857</name>
</gene>
<evidence type="ECO:0000255" key="1"/>
<evidence type="ECO:0000305" key="2"/>
<keyword id="KW-0175">Coiled coil</keyword>
<keyword id="KW-1185">Reference proteome</keyword>
<proteinExistence type="inferred from homology"/>
<accession>Q5UQQ6</accession>